<proteinExistence type="inferred from homology"/>
<evidence type="ECO:0000255" key="1">
    <source>
        <dbReference type="HAMAP-Rule" id="MF_01518"/>
    </source>
</evidence>
<comment type="catalytic activity">
    <reaction evidence="1">
        <text>adenine + H2O + H(+) = hypoxanthine + NH4(+)</text>
        <dbReference type="Rhea" id="RHEA:23688"/>
        <dbReference type="ChEBI" id="CHEBI:15377"/>
        <dbReference type="ChEBI" id="CHEBI:15378"/>
        <dbReference type="ChEBI" id="CHEBI:16708"/>
        <dbReference type="ChEBI" id="CHEBI:17368"/>
        <dbReference type="ChEBI" id="CHEBI:28938"/>
        <dbReference type="EC" id="3.5.4.2"/>
    </reaction>
</comment>
<comment type="cofactor">
    <cofactor evidence="1">
        <name>Mn(2+)</name>
        <dbReference type="ChEBI" id="CHEBI:29035"/>
    </cofactor>
</comment>
<comment type="similarity">
    <text evidence="1">Belongs to the metallo-dependent hydrolases superfamily. Adenine deaminase family.</text>
</comment>
<keyword id="KW-0378">Hydrolase</keyword>
<keyword id="KW-0464">Manganese</keyword>
<organism>
    <name type="scientific">Mesorhizobium japonicum (strain LMG 29417 / CECT 9101 / MAFF 303099)</name>
    <name type="common">Mesorhizobium loti (strain MAFF 303099)</name>
    <dbReference type="NCBI Taxonomy" id="266835"/>
    <lineage>
        <taxon>Bacteria</taxon>
        <taxon>Pseudomonadati</taxon>
        <taxon>Pseudomonadota</taxon>
        <taxon>Alphaproteobacteria</taxon>
        <taxon>Hyphomicrobiales</taxon>
        <taxon>Phyllobacteriaceae</taxon>
        <taxon>Mesorhizobium</taxon>
    </lineage>
</organism>
<sequence>MAKKPAAHATKPKPWTEMATHLVDVAMGRKPADLVIRNGRWVNVHSGEIIAGTDIAIAGGRFAYCGPNASHAIGQGTKVVDAGGRYLVPGLCDAHMHVESGMVTVTEFCRAVIPHGTTSMFIDPHEIANVLGLPGVRLMHDEAVAMPINVHVQMPSCVPSAPGLEHAGAELTVADVAEAMTWENIIGLGEVMNFPGVAANDPVMSGEIAATVRAGKTVGGHYASRDLGLPFHGYVAGGPEDDHEGTRAEDAIARVRQGMKAMLRLGSAWYDVASQIKAVTEGGIDPRNFILCTDDSHSGTLVHEGHMDRVVRHAIQQGLKPVTAIQMATINTAQHFRLEREIGSIAPGRLADLLIVSDLAAMTIDEVYARGVRLAKGGKLDIDIPAYDYPKTAKNTVKLGKKLRAGDFDITAPKGANEVRVRVIGVIENQAPTRALEADLPVEDGLVAMDRRNDVCQIALVERHRGTGGVTNAFVSGFGYMGDCAMASSVAHDAHHIICVGTNKQDMALAVNRLGQVGGGVVLFSKGKELALVEMPIAGLMSDERAEIVAAKAEKLTEAMRKMGCSLNNAYMQHSLLALVVIPELRISDVGLIDVTTFQKVDLFV</sequence>
<dbReference type="EC" id="3.5.4.2" evidence="1"/>
<dbReference type="EMBL" id="BA000012">
    <property type="protein sequence ID" value="BAB47802.1"/>
    <property type="molecule type" value="Genomic_DNA"/>
</dbReference>
<dbReference type="RefSeq" id="WP_010909172.1">
    <property type="nucleotide sequence ID" value="NC_002678.2"/>
</dbReference>
<dbReference type="SMR" id="Q98NF9"/>
<dbReference type="KEGG" id="mlo:mlr0157"/>
<dbReference type="PATRIC" id="fig|266835.9.peg.122"/>
<dbReference type="eggNOG" id="COG1001">
    <property type="taxonomic scope" value="Bacteria"/>
</dbReference>
<dbReference type="HOGENOM" id="CLU_027935_0_0_5"/>
<dbReference type="Proteomes" id="UP000000552">
    <property type="component" value="Chromosome"/>
</dbReference>
<dbReference type="GO" id="GO:0000034">
    <property type="term" value="F:adenine deaminase activity"/>
    <property type="evidence" value="ECO:0007669"/>
    <property type="project" value="UniProtKB-UniRule"/>
</dbReference>
<dbReference type="GO" id="GO:0006146">
    <property type="term" value="P:adenine catabolic process"/>
    <property type="evidence" value="ECO:0007669"/>
    <property type="project" value="InterPro"/>
</dbReference>
<dbReference type="CDD" id="cd01295">
    <property type="entry name" value="AdeC"/>
    <property type="match status" value="1"/>
</dbReference>
<dbReference type="Gene3D" id="3.20.20.140">
    <property type="entry name" value="Metal-dependent hydrolases"/>
    <property type="match status" value="1"/>
</dbReference>
<dbReference type="Gene3D" id="2.30.40.10">
    <property type="entry name" value="Urease, subunit C, domain 1"/>
    <property type="match status" value="1"/>
</dbReference>
<dbReference type="HAMAP" id="MF_01518">
    <property type="entry name" value="Adenine_deamin"/>
    <property type="match status" value="1"/>
</dbReference>
<dbReference type="InterPro" id="IPR006679">
    <property type="entry name" value="Adenine_deam"/>
</dbReference>
<dbReference type="InterPro" id="IPR026912">
    <property type="entry name" value="Adenine_deam_C"/>
</dbReference>
<dbReference type="InterPro" id="IPR006680">
    <property type="entry name" value="Amidohydro-rel"/>
</dbReference>
<dbReference type="InterPro" id="IPR011059">
    <property type="entry name" value="Metal-dep_hydrolase_composite"/>
</dbReference>
<dbReference type="InterPro" id="IPR032466">
    <property type="entry name" value="Metal_Hydrolase"/>
</dbReference>
<dbReference type="NCBIfam" id="TIGR01178">
    <property type="entry name" value="ade"/>
    <property type="match status" value="1"/>
</dbReference>
<dbReference type="PANTHER" id="PTHR11113:SF2">
    <property type="entry name" value="ADENINE DEAMINASE"/>
    <property type="match status" value="1"/>
</dbReference>
<dbReference type="PANTHER" id="PTHR11113">
    <property type="entry name" value="N-ACETYLGLUCOSAMINE-6-PHOSPHATE DEACETYLASE"/>
    <property type="match status" value="1"/>
</dbReference>
<dbReference type="Pfam" id="PF13382">
    <property type="entry name" value="Adenine_deam_C"/>
    <property type="match status" value="1"/>
</dbReference>
<dbReference type="Pfam" id="PF01979">
    <property type="entry name" value="Amidohydro_1"/>
    <property type="match status" value="1"/>
</dbReference>
<dbReference type="SUPFAM" id="SSF51338">
    <property type="entry name" value="Composite domain of metallo-dependent hydrolases"/>
    <property type="match status" value="1"/>
</dbReference>
<dbReference type="SUPFAM" id="SSF51556">
    <property type="entry name" value="Metallo-dependent hydrolases"/>
    <property type="match status" value="1"/>
</dbReference>
<feature type="chain" id="PRO_0000142431" description="Adenine deaminase">
    <location>
        <begin position="1"/>
        <end position="605"/>
    </location>
</feature>
<gene>
    <name evidence="1" type="primary">ade</name>
    <name type="ordered locus">mlr0157</name>
</gene>
<accession>Q98NF9</accession>
<protein>
    <recommendedName>
        <fullName evidence="1">Adenine deaminase</fullName>
        <shortName evidence="1">Adenase</shortName>
        <shortName evidence="1">Adenine aminase</shortName>
        <ecNumber evidence="1">3.5.4.2</ecNumber>
    </recommendedName>
</protein>
<name>ADEC_RHILO</name>
<reference key="1">
    <citation type="journal article" date="2000" name="DNA Res.">
        <title>Complete genome structure of the nitrogen-fixing symbiotic bacterium Mesorhizobium loti.</title>
        <authorList>
            <person name="Kaneko T."/>
            <person name="Nakamura Y."/>
            <person name="Sato S."/>
            <person name="Asamizu E."/>
            <person name="Kato T."/>
            <person name="Sasamoto S."/>
            <person name="Watanabe A."/>
            <person name="Idesawa K."/>
            <person name="Ishikawa A."/>
            <person name="Kawashima K."/>
            <person name="Kimura T."/>
            <person name="Kishida Y."/>
            <person name="Kiyokawa C."/>
            <person name="Kohara M."/>
            <person name="Matsumoto M."/>
            <person name="Matsuno A."/>
            <person name="Mochizuki Y."/>
            <person name="Nakayama S."/>
            <person name="Nakazaki N."/>
            <person name="Shimpo S."/>
            <person name="Sugimoto M."/>
            <person name="Takeuchi C."/>
            <person name="Yamada M."/>
            <person name="Tabata S."/>
        </authorList>
    </citation>
    <scope>NUCLEOTIDE SEQUENCE [LARGE SCALE GENOMIC DNA]</scope>
    <source>
        <strain>LMG 29417 / CECT 9101 / MAFF 303099</strain>
    </source>
</reference>